<protein>
    <recommendedName>
        <fullName evidence="1">Cytochrome c-552</fullName>
        <ecNumber evidence="1">1.7.2.2</ecNumber>
    </recommendedName>
    <alternativeName>
        <fullName evidence="1">Ammonia-forming cytochrome c nitrite reductase</fullName>
        <shortName evidence="1">Cytochrome c nitrite reductase</shortName>
    </alternativeName>
</protein>
<feature type="signal peptide" evidence="1">
    <location>
        <begin position="1"/>
        <end position="26"/>
    </location>
</feature>
<feature type="chain" id="PRO_1000138222" description="Cytochrome c-552">
    <location>
        <begin position="27"/>
        <end position="478"/>
    </location>
</feature>
<feature type="binding site" description="axial binding residue" evidence="1">
    <location>
        <position position="94"/>
    </location>
    <ligand>
        <name>heme c</name>
        <dbReference type="ChEBI" id="CHEBI:61717"/>
        <label>3</label>
    </ligand>
    <ligandPart>
        <name>Fe</name>
        <dbReference type="ChEBI" id="CHEBI:18248"/>
    </ligandPart>
</feature>
<feature type="binding site" description="covalent" evidence="1">
    <location>
        <position position="122"/>
    </location>
    <ligand>
        <name>heme</name>
        <dbReference type="ChEBI" id="CHEBI:30413"/>
        <label>1</label>
    </ligand>
</feature>
<feature type="binding site" description="covalent" evidence="1">
    <location>
        <position position="125"/>
    </location>
    <ligand>
        <name>heme</name>
        <dbReference type="ChEBI" id="CHEBI:30413"/>
        <label>1</label>
    </ligand>
</feature>
<feature type="binding site" description="axial binding residue" evidence="1">
    <location>
        <position position="126"/>
    </location>
    <ligand>
        <name>heme</name>
        <dbReference type="ChEBI" id="CHEBI:30413"/>
        <label>1</label>
    </ligand>
    <ligandPart>
        <name>Fe</name>
        <dbReference type="ChEBI" id="CHEBI:18248"/>
    </ligandPart>
</feature>
<feature type="binding site" description="covalent" evidence="1">
    <location>
        <position position="160"/>
    </location>
    <ligand>
        <name>heme c</name>
        <dbReference type="ChEBI" id="CHEBI:61717"/>
        <label>2</label>
    </ligand>
</feature>
<feature type="binding site" description="covalent" evidence="1">
    <location>
        <position position="163"/>
    </location>
    <ligand>
        <name>heme c</name>
        <dbReference type="ChEBI" id="CHEBI:61717"/>
        <label>2</label>
    </ligand>
</feature>
<feature type="binding site" description="axial binding residue" evidence="1">
    <location>
        <position position="164"/>
    </location>
    <ligand>
        <name>heme c</name>
        <dbReference type="ChEBI" id="CHEBI:61717"/>
        <label>2</label>
    </ligand>
    <ligandPart>
        <name>Fe</name>
        <dbReference type="ChEBI" id="CHEBI:18248"/>
    </ligandPart>
</feature>
<feature type="binding site" description="covalent" evidence="1">
    <location>
        <position position="209"/>
    </location>
    <ligand>
        <name>heme c</name>
        <dbReference type="ChEBI" id="CHEBI:61717"/>
        <label>3</label>
    </ligand>
</feature>
<feature type="binding site" description="covalent" evidence="1">
    <location>
        <position position="212"/>
    </location>
    <ligand>
        <name>heme c</name>
        <dbReference type="ChEBI" id="CHEBI:61717"/>
        <label>3</label>
    </ligand>
</feature>
<feature type="binding site" description="axial binding residue" evidence="1">
    <location>
        <position position="213"/>
    </location>
    <ligand>
        <name>heme c</name>
        <dbReference type="ChEBI" id="CHEBI:61717"/>
        <label>3</label>
    </ligand>
    <ligandPart>
        <name>Fe</name>
        <dbReference type="ChEBI" id="CHEBI:18248"/>
    </ligandPart>
</feature>
<feature type="binding site" evidence="1">
    <location>
        <position position="215"/>
    </location>
    <ligand>
        <name>Ca(2+)</name>
        <dbReference type="ChEBI" id="CHEBI:29108"/>
    </ligand>
</feature>
<feature type="binding site" evidence="1">
    <location>
        <position position="216"/>
    </location>
    <ligand>
        <name>Ca(2+)</name>
        <dbReference type="ChEBI" id="CHEBI:29108"/>
    </ligand>
</feature>
<feature type="binding site" evidence="1">
    <location>
        <position position="216"/>
    </location>
    <ligand>
        <name>substrate</name>
    </ligand>
</feature>
<feature type="binding site" evidence="1">
    <location>
        <position position="261"/>
    </location>
    <ligand>
        <name>Ca(2+)</name>
        <dbReference type="ChEBI" id="CHEBI:29108"/>
    </ligand>
</feature>
<feature type="binding site" evidence="1">
    <location>
        <position position="263"/>
    </location>
    <ligand>
        <name>Ca(2+)</name>
        <dbReference type="ChEBI" id="CHEBI:29108"/>
    </ligand>
</feature>
<feature type="binding site" evidence="1">
    <location>
        <position position="264"/>
    </location>
    <ligand>
        <name>substrate</name>
    </ligand>
</feature>
<feature type="binding site" description="axial binding residue" evidence="1">
    <location>
        <position position="275"/>
    </location>
    <ligand>
        <name>heme c</name>
        <dbReference type="ChEBI" id="CHEBI:61717"/>
        <label>5</label>
    </ligand>
    <ligandPart>
        <name>Fe</name>
        <dbReference type="ChEBI" id="CHEBI:18248"/>
    </ligandPart>
</feature>
<feature type="binding site" description="covalent" evidence="1">
    <location>
        <position position="282"/>
    </location>
    <ligand>
        <name>heme c</name>
        <dbReference type="ChEBI" id="CHEBI:61717"/>
        <label>4</label>
    </ligand>
</feature>
<feature type="binding site" description="covalent" evidence="1">
    <location>
        <position position="285"/>
    </location>
    <ligand>
        <name>heme c</name>
        <dbReference type="ChEBI" id="CHEBI:61717"/>
        <label>4</label>
    </ligand>
</feature>
<feature type="binding site" description="axial binding residue" evidence="1">
    <location>
        <position position="286"/>
    </location>
    <ligand>
        <name>heme c</name>
        <dbReference type="ChEBI" id="CHEBI:61717"/>
        <label>4</label>
    </ligand>
    <ligandPart>
        <name>Fe</name>
        <dbReference type="ChEBI" id="CHEBI:18248"/>
    </ligandPart>
</feature>
<feature type="binding site" description="axial binding residue" evidence="1">
    <location>
        <position position="301"/>
    </location>
    <ligand>
        <name>heme c</name>
        <dbReference type="ChEBI" id="CHEBI:61717"/>
        <label>2</label>
    </ligand>
    <ligandPart>
        <name>Fe</name>
        <dbReference type="ChEBI" id="CHEBI:18248"/>
    </ligandPart>
</feature>
<feature type="binding site" description="covalent" evidence="1">
    <location>
        <position position="314"/>
    </location>
    <ligand>
        <name>heme c</name>
        <dbReference type="ChEBI" id="CHEBI:61717"/>
        <label>5</label>
    </ligand>
</feature>
<feature type="binding site" description="covalent" evidence="1">
    <location>
        <position position="317"/>
    </location>
    <ligand>
        <name>heme c</name>
        <dbReference type="ChEBI" id="CHEBI:61717"/>
        <label>5</label>
    </ligand>
</feature>
<feature type="binding site" description="axial binding residue" evidence="1">
    <location>
        <position position="318"/>
    </location>
    <ligand>
        <name>heme c</name>
        <dbReference type="ChEBI" id="CHEBI:61717"/>
        <label>5</label>
    </ligand>
    <ligandPart>
        <name>Fe</name>
        <dbReference type="ChEBI" id="CHEBI:18248"/>
    </ligandPart>
</feature>
<feature type="binding site" description="axial binding residue" evidence="1">
    <location>
        <position position="393"/>
    </location>
    <ligand>
        <name>heme c</name>
        <dbReference type="ChEBI" id="CHEBI:61717"/>
        <label>4</label>
    </ligand>
    <ligandPart>
        <name>Fe</name>
        <dbReference type="ChEBI" id="CHEBI:18248"/>
    </ligandPart>
</feature>
<name>NRFA_SALSV</name>
<evidence type="ECO:0000255" key="1">
    <source>
        <dbReference type="HAMAP-Rule" id="MF_01182"/>
    </source>
</evidence>
<sequence length="478" mass="53727">MARKTLRARRFFSLIFPFFFITSVYAEQTPVSAKTVTVEAKNETFAPQHPDQYQSWKATSEQSAREDALAEDPRLVILWAGYPFSRDYNKPRGHAYAVTDVRETLRTGAPKTAEDGPLPMACWSCKSPDVARLIQQEGEDGYFHGKWARGGPEIVNDLGCADCHNTASDDFAQGKPALTLSRPYAERAMEAIGKPFDKAGRFDQQSMVCGQCHVEYYFDGKNKAVKFPWDEGMKVENMEQYYDAIAFSDWTNSLSKTPMLKAQHPEYETWSAGIHGKNNVTCIDCHMPKVQNAEGKLYTDHKIGNPFDNFAQTCANCHTQDKASLQKVVAERKQAIHDLKIKVEDQLVHAHFEAKAAWDAGATDAEMKPILNDIRHAQWRWDLAIASHGIHMHAPEEGLRMLGSAMDKAADARTKLARLLATKGITHEIPLPDISTKEKAQKAIGLNMQQINAEKQDFLKTVVPQWEDQARKNGLLSQ</sequence>
<accession>B4TRK5</accession>
<comment type="function">
    <text evidence="1">Catalyzes the reduction of nitrite to ammonia, consuming six electrons in the process.</text>
</comment>
<comment type="catalytic activity">
    <reaction evidence="1">
        <text>6 Fe(III)-[cytochrome c] + NH4(+) + 2 H2O = 6 Fe(II)-[cytochrome c] + nitrite + 8 H(+)</text>
        <dbReference type="Rhea" id="RHEA:13089"/>
        <dbReference type="Rhea" id="RHEA-COMP:10350"/>
        <dbReference type="Rhea" id="RHEA-COMP:14399"/>
        <dbReference type="ChEBI" id="CHEBI:15377"/>
        <dbReference type="ChEBI" id="CHEBI:15378"/>
        <dbReference type="ChEBI" id="CHEBI:16301"/>
        <dbReference type="ChEBI" id="CHEBI:28938"/>
        <dbReference type="ChEBI" id="CHEBI:29033"/>
        <dbReference type="ChEBI" id="CHEBI:29034"/>
        <dbReference type="EC" id="1.7.2.2"/>
    </reaction>
</comment>
<comment type="cofactor">
    <cofactor evidence="1">
        <name>Ca(2+)</name>
        <dbReference type="ChEBI" id="CHEBI:29108"/>
    </cofactor>
    <text evidence="1">Binds 1 Ca(2+) ion per monomer.</text>
</comment>
<comment type="cofactor">
    <cofactor evidence="1">
        <name>heme c</name>
        <dbReference type="ChEBI" id="CHEBI:61717"/>
    </cofactor>
    <text evidence="1">Binds 5 heme c groups covalently per monomer.</text>
</comment>
<comment type="pathway">
    <text evidence="1">Nitrogen metabolism; nitrate reduction (assimilation).</text>
</comment>
<comment type="subcellular location">
    <subcellularLocation>
        <location evidence="1">Periplasm</location>
    </subcellularLocation>
</comment>
<comment type="similarity">
    <text evidence="1">Belongs to the cytochrome c-552 family.</text>
</comment>
<proteinExistence type="inferred from homology"/>
<gene>
    <name evidence="1" type="primary">nrfA</name>
    <name type="ordered locus">SeSA_A4529</name>
</gene>
<reference key="1">
    <citation type="journal article" date="2011" name="J. Bacteriol.">
        <title>Comparative genomics of 28 Salmonella enterica isolates: evidence for CRISPR-mediated adaptive sublineage evolution.</title>
        <authorList>
            <person name="Fricke W.F."/>
            <person name="Mammel M.K."/>
            <person name="McDermott P.F."/>
            <person name="Tartera C."/>
            <person name="White D.G."/>
            <person name="Leclerc J.E."/>
            <person name="Ravel J."/>
            <person name="Cebula T.A."/>
        </authorList>
    </citation>
    <scope>NUCLEOTIDE SEQUENCE [LARGE SCALE GENOMIC DNA]</scope>
    <source>
        <strain>CVM19633</strain>
    </source>
</reference>
<keyword id="KW-0106">Calcium</keyword>
<keyword id="KW-0249">Electron transport</keyword>
<keyword id="KW-0349">Heme</keyword>
<keyword id="KW-0408">Iron</keyword>
<keyword id="KW-0479">Metal-binding</keyword>
<keyword id="KW-0560">Oxidoreductase</keyword>
<keyword id="KW-0574">Periplasm</keyword>
<keyword id="KW-0732">Signal</keyword>
<keyword id="KW-0813">Transport</keyword>
<dbReference type="EC" id="1.7.2.2" evidence="1"/>
<dbReference type="EMBL" id="CP001127">
    <property type="protein sequence ID" value="ACF91328.1"/>
    <property type="molecule type" value="Genomic_DNA"/>
</dbReference>
<dbReference type="RefSeq" id="WP_000101784.1">
    <property type="nucleotide sequence ID" value="NC_011094.1"/>
</dbReference>
<dbReference type="SMR" id="B4TRK5"/>
<dbReference type="KEGG" id="sew:SeSA_A4529"/>
<dbReference type="HOGENOM" id="CLU_035040_1_0_6"/>
<dbReference type="UniPathway" id="UPA00653"/>
<dbReference type="Proteomes" id="UP000001865">
    <property type="component" value="Chromosome"/>
</dbReference>
<dbReference type="GO" id="GO:0030288">
    <property type="term" value="C:outer membrane-bounded periplasmic space"/>
    <property type="evidence" value="ECO:0007669"/>
    <property type="project" value="TreeGrafter"/>
</dbReference>
<dbReference type="GO" id="GO:0005509">
    <property type="term" value="F:calcium ion binding"/>
    <property type="evidence" value="ECO:0007669"/>
    <property type="project" value="UniProtKB-UniRule"/>
</dbReference>
<dbReference type="GO" id="GO:0020037">
    <property type="term" value="F:heme binding"/>
    <property type="evidence" value="ECO:0007669"/>
    <property type="project" value="InterPro"/>
</dbReference>
<dbReference type="GO" id="GO:0005506">
    <property type="term" value="F:iron ion binding"/>
    <property type="evidence" value="ECO:0007669"/>
    <property type="project" value="UniProtKB-UniRule"/>
</dbReference>
<dbReference type="GO" id="GO:0042279">
    <property type="term" value="F:nitrite reductase (cytochrome, ammonia-forming) activity"/>
    <property type="evidence" value="ECO:0007669"/>
    <property type="project" value="UniProtKB-UniRule"/>
</dbReference>
<dbReference type="GO" id="GO:0019645">
    <property type="term" value="P:anaerobic electron transport chain"/>
    <property type="evidence" value="ECO:0007669"/>
    <property type="project" value="TreeGrafter"/>
</dbReference>
<dbReference type="GO" id="GO:0042128">
    <property type="term" value="P:nitrate assimilation"/>
    <property type="evidence" value="ECO:0007669"/>
    <property type="project" value="UniProtKB-UniRule"/>
</dbReference>
<dbReference type="CDD" id="cd00548">
    <property type="entry name" value="NrfA-like"/>
    <property type="match status" value="1"/>
</dbReference>
<dbReference type="FunFam" id="1.10.1130.10:FF:000002">
    <property type="entry name" value="Cytochrome c-552"/>
    <property type="match status" value="1"/>
</dbReference>
<dbReference type="FunFam" id="1.20.140.10:FF:000014">
    <property type="entry name" value="Cytochrome c-552"/>
    <property type="match status" value="1"/>
</dbReference>
<dbReference type="Gene3D" id="1.20.140.10">
    <property type="entry name" value="Butyryl-CoA Dehydrogenase, subunit A, domain 3"/>
    <property type="match status" value="1"/>
</dbReference>
<dbReference type="Gene3D" id="1.10.1130.10">
    <property type="entry name" value="Flavocytochrome C3, Chain A"/>
    <property type="match status" value="1"/>
</dbReference>
<dbReference type="HAMAP" id="MF_01182">
    <property type="entry name" value="Cytochrom_C552"/>
    <property type="match status" value="1"/>
</dbReference>
<dbReference type="InterPro" id="IPR003321">
    <property type="entry name" value="Cyt_c552"/>
</dbReference>
<dbReference type="InterPro" id="IPR017570">
    <property type="entry name" value="Cyt_c_NO2Rdtase_formate-dep"/>
</dbReference>
<dbReference type="InterPro" id="IPR036280">
    <property type="entry name" value="Multihaem_cyt_sf"/>
</dbReference>
<dbReference type="NCBIfam" id="TIGR03152">
    <property type="entry name" value="cyto_c552_HCOOH"/>
    <property type="match status" value="1"/>
</dbReference>
<dbReference type="NCBIfam" id="NF008339">
    <property type="entry name" value="PRK11125.1"/>
    <property type="match status" value="1"/>
</dbReference>
<dbReference type="PANTHER" id="PTHR30633:SF0">
    <property type="entry name" value="CYTOCHROME C-552"/>
    <property type="match status" value="1"/>
</dbReference>
<dbReference type="PANTHER" id="PTHR30633">
    <property type="entry name" value="CYTOCHROME C-552 RESPIRATORY NITRITE REDUCTASE"/>
    <property type="match status" value="1"/>
</dbReference>
<dbReference type="Pfam" id="PF02335">
    <property type="entry name" value="Cytochrom_C552"/>
    <property type="match status" value="1"/>
</dbReference>
<dbReference type="PIRSF" id="PIRSF000243">
    <property type="entry name" value="Cyt_c552"/>
    <property type="match status" value="1"/>
</dbReference>
<dbReference type="SUPFAM" id="SSF48695">
    <property type="entry name" value="Multiheme cytochromes"/>
    <property type="match status" value="1"/>
</dbReference>
<dbReference type="PROSITE" id="PS51008">
    <property type="entry name" value="MULTIHEME_CYTC"/>
    <property type="match status" value="1"/>
</dbReference>
<organism>
    <name type="scientific">Salmonella schwarzengrund (strain CVM19633)</name>
    <dbReference type="NCBI Taxonomy" id="439843"/>
    <lineage>
        <taxon>Bacteria</taxon>
        <taxon>Pseudomonadati</taxon>
        <taxon>Pseudomonadota</taxon>
        <taxon>Gammaproteobacteria</taxon>
        <taxon>Enterobacterales</taxon>
        <taxon>Enterobacteriaceae</taxon>
        <taxon>Salmonella</taxon>
    </lineage>
</organism>